<feature type="chain" id="PRO_0000431426" description="Origin of replication complex subunit 1A">
    <location>
        <begin position="1"/>
        <end position="809"/>
    </location>
</feature>
<feature type="domain" description="BAH" evidence="7">
    <location>
        <begin position="223"/>
        <end position="341"/>
    </location>
</feature>
<feature type="zinc finger region" description="PHD-type" evidence="6">
    <location>
        <begin position="163"/>
        <end position="213"/>
    </location>
</feature>
<feature type="region of interest" description="Disordered" evidence="8">
    <location>
        <begin position="1"/>
        <end position="69"/>
    </location>
</feature>
<feature type="region of interest" description="Histone H3 binding" evidence="4">
    <location>
        <begin position="160"/>
        <end position="185"/>
    </location>
</feature>
<feature type="region of interest" description="Histone H3 binding" evidence="4">
    <location>
        <begin position="201"/>
        <end position="205"/>
    </location>
</feature>
<feature type="region of interest" description="Histone H3 binding" evidence="4">
    <location>
        <begin position="316"/>
        <end position="321"/>
    </location>
</feature>
<feature type="region of interest" description="Necessary and sufficient for ORC complex assembly" evidence="3">
    <location>
        <begin position="431"/>
        <end position="799"/>
    </location>
</feature>
<feature type="compositionally biased region" description="Low complexity" evidence="8">
    <location>
        <begin position="1"/>
        <end position="47"/>
    </location>
</feature>
<feature type="binding site" evidence="4">
    <location>
        <position position="166"/>
    </location>
    <ligand>
        <name>Zn(2+)</name>
        <dbReference type="ChEBI" id="CHEBI:29105"/>
        <label>2</label>
    </ligand>
</feature>
<feature type="binding site" evidence="4">
    <location>
        <position position="169"/>
    </location>
    <ligand>
        <name>Zn(2+)</name>
        <dbReference type="ChEBI" id="CHEBI:29105"/>
        <label>2</label>
    </ligand>
</feature>
<feature type="binding site" evidence="4">
    <location>
        <position position="181"/>
    </location>
    <ligand>
        <name>Zn(2+)</name>
        <dbReference type="ChEBI" id="CHEBI:29105"/>
        <label>1</label>
    </ligand>
</feature>
<feature type="binding site" evidence="4">
    <location>
        <position position="184"/>
    </location>
    <ligand>
        <name>Zn(2+)</name>
        <dbReference type="ChEBI" id="CHEBI:29105"/>
        <label>1</label>
    </ligand>
</feature>
<feature type="binding site" evidence="4">
    <location>
        <position position="189"/>
    </location>
    <ligand>
        <name>Zn(2+)</name>
        <dbReference type="ChEBI" id="CHEBI:29105"/>
        <label>2</label>
    </ligand>
</feature>
<feature type="binding site" evidence="4">
    <location>
        <position position="192"/>
    </location>
    <ligand>
        <name>Zn(2+)</name>
        <dbReference type="ChEBI" id="CHEBI:29105"/>
        <label>2</label>
    </ligand>
</feature>
<feature type="binding site" evidence="4">
    <location>
        <position position="207"/>
    </location>
    <ligand>
        <name>Zn(2+)</name>
        <dbReference type="ChEBI" id="CHEBI:29105"/>
        <label>1</label>
    </ligand>
</feature>
<feature type="binding site" evidence="4">
    <location>
        <position position="210"/>
    </location>
    <ligand>
        <name>Zn(2+)</name>
        <dbReference type="ChEBI" id="CHEBI:29105"/>
        <label>1</label>
    </ligand>
</feature>
<feature type="binding site" evidence="3">
    <location>
        <begin position="466"/>
        <end position="474"/>
    </location>
    <ligand>
        <name>ATP</name>
        <dbReference type="ChEBI" id="CHEBI:30616"/>
    </ligand>
</feature>
<feature type="binding site" evidence="5">
    <location>
        <begin position="466"/>
        <end position="473"/>
    </location>
    <ligand>
        <name>ATP</name>
        <dbReference type="ChEBI" id="CHEBI:30616"/>
    </ligand>
</feature>
<feature type="binding site" evidence="3">
    <location>
        <position position="556"/>
    </location>
    <ligand>
        <name>Mg(2+)</name>
        <dbReference type="ChEBI" id="CHEBI:18420"/>
    </ligand>
</feature>
<feature type="binding site" evidence="3">
    <location>
        <position position="557"/>
    </location>
    <ligand>
        <name>ATP</name>
        <dbReference type="ChEBI" id="CHEBI:30616"/>
    </ligand>
</feature>
<feature type="binding site" evidence="3">
    <location>
        <position position="557"/>
    </location>
    <ligand>
        <name>Mg(2+)</name>
        <dbReference type="ChEBI" id="CHEBI:18420"/>
    </ligand>
</feature>
<feature type="binding site" evidence="3">
    <location>
        <position position="590"/>
    </location>
    <ligand>
        <name>ATP</name>
        <dbReference type="ChEBI" id="CHEBI:30616"/>
    </ligand>
</feature>
<feature type="binding site" evidence="3">
    <location>
        <position position="655"/>
    </location>
    <ligand>
        <name>ATP</name>
        <dbReference type="ChEBI" id="CHEBI:30616"/>
    </ligand>
</feature>
<feature type="sequence conflict" description="In Ref. 2; AAK69447." evidence="16" ref="2">
    <original>L</original>
    <variation>P</variation>
    <location>
        <position position="5"/>
    </location>
</feature>
<feature type="sequence conflict" description="In Ref. 2; AAK69447." evidence="16" ref="2">
    <original>G</original>
    <variation>E</variation>
    <location>
        <position position="61"/>
    </location>
</feature>
<feature type="sequence conflict" description="In Ref. 2; AAK69447." evidence="16" ref="2">
    <original>GKESV</original>
    <variation>ERESI</variation>
    <location>
        <begin position="69"/>
        <end position="73"/>
    </location>
</feature>
<feature type="sequence conflict" description="In Ref. 2; AAK69447." evidence="16" ref="2">
    <original>K</original>
    <variation>M</variation>
    <location>
        <position position="146"/>
    </location>
</feature>
<feature type="sequence conflict" description="In Ref. 2; AAK69447." evidence="16" ref="2">
    <original>L</original>
    <variation>V</variation>
    <location>
        <position position="398"/>
    </location>
</feature>
<feature type="sequence conflict" description="In Ref. 2; AAK69447." evidence="16" ref="2">
    <original>K</original>
    <variation>M</variation>
    <location>
        <position position="597"/>
    </location>
</feature>
<feature type="sequence conflict" description="In Ref. 2; AAK69447." evidence="16" ref="2">
    <original>S</original>
    <variation>P</variation>
    <location>
        <position position="742"/>
    </location>
</feature>
<feature type="sequence conflict" description="In Ref. 2; AAK69447." evidence="16" ref="2">
    <original>V</original>
    <variation>A</variation>
    <location>
        <position position="770"/>
    </location>
</feature>
<feature type="sequence conflict" description="In Ref. 2; AAK69447." evidence="16" ref="2">
    <original>L</original>
    <variation>F</variation>
    <location>
        <position position="809"/>
    </location>
</feature>
<sequence length="809" mass="91896">MASSLSSKAKTFKSPTKTPTKMYRKSYLSPSSTSLTPPQTPETLTPLRRSSRHVSRKINLGNDPIDLPGKESVEEINLIRKPRKRTNDIVVAEKSKKKKIDPEVSFSPVSPIRSETKKTKKKKRVYYNKVEFDETEFEIGDDVYVKRTEDANPDEEEEEDPEIEDCQICFKSHTNTIMIECDDCLGGFHLNCLKPPLKEVPEGDWICQFCEVKKSGQTLVVVPKPPEGKKLARTMKEKLLSSDLWAARIEKLWKEVDDGVYWIRARWYMIPEETVLGRQRHNLKRELYLTNDFADIEMECVLRHCFVKCPKEFSKASNDGDDVFLCEYEYDVHWGSFKRVAELADGDEDSDQEWNGRKEEEIDYSDEEIEFDDEESVRGVSKSKRGGANSRKGRFFGLEKVGMKRIPEHVRCHKQSELEKAKATLLLATRPKSLPCRSKEMEEITAFIKGSISDDQCLGRCMYIHGVPGTGKTISVLSVMKNLKAEVEAGSVSPYCFVEINGLKLASPENIYSVIYEGLSGHRVGWKKALQSLNERFAEGKKIGKENEKPCILLIDELDVLVTRNQSVLYNILDWPTKPNSKLVVLGIANTMDLPEKLLPRISSRMGIQRLCFGPYNHRQLQEIISTRLEGINAFEKTAIEFASRKVAAISGDARRALEICRRAAEVADYRLKKSNISAKSQLVIMADVEVAIQEMFQAPHIQVMKSVSKLSRIFLTAMVHELYKTGMAETSFDRVATTVSSICLTNGEAFPGWDILLKIGCDLGECRIVLCEPGEKHRLQKLQLNFPSDDVAFALKDNKDLPWLANYL</sequence>
<evidence type="ECO:0000250" key="1">
    <source>
        <dbReference type="UniProtKB" id="P54784"/>
    </source>
</evidence>
<evidence type="ECO:0000250" key="2">
    <source>
        <dbReference type="UniProtKB" id="P54789"/>
    </source>
</evidence>
<evidence type="ECO:0000250" key="3">
    <source>
        <dbReference type="UniProtKB" id="Q13415"/>
    </source>
</evidence>
<evidence type="ECO:0000250" key="4">
    <source>
        <dbReference type="UniProtKB" id="Q9SU24"/>
    </source>
</evidence>
<evidence type="ECO:0000255" key="5"/>
<evidence type="ECO:0000255" key="6">
    <source>
        <dbReference type="PROSITE-ProRule" id="PRU00146"/>
    </source>
</evidence>
<evidence type="ECO:0000255" key="7">
    <source>
        <dbReference type="PROSITE-ProRule" id="PRU00370"/>
    </source>
</evidence>
<evidence type="ECO:0000256" key="8">
    <source>
        <dbReference type="SAM" id="MobiDB-lite"/>
    </source>
</evidence>
<evidence type="ECO:0000269" key="9">
    <source>
    </source>
</evidence>
<evidence type="ECO:0000269" key="10">
    <source>
    </source>
</evidence>
<evidence type="ECO:0000269" key="11">
    <source>
    </source>
</evidence>
<evidence type="ECO:0000269" key="12">
    <source>
    </source>
</evidence>
<evidence type="ECO:0000303" key="13">
    <source>
    </source>
</evidence>
<evidence type="ECO:0000303" key="14">
    <source>
    </source>
</evidence>
<evidence type="ECO:0000303" key="15">
    <source ref="2"/>
</evidence>
<evidence type="ECO:0000305" key="16"/>
<evidence type="ECO:0000312" key="17">
    <source>
        <dbReference type="Araport" id="AT4G14700"/>
    </source>
</evidence>
<evidence type="ECO:0000312" key="18">
    <source>
        <dbReference type="EMBL" id="CAB10249.1"/>
    </source>
</evidence>
<evidence type="ECO:0000312" key="19">
    <source>
        <dbReference type="EMBL" id="CAB78512.1"/>
    </source>
</evidence>
<name>ORC1A_ARATH</name>
<accession>Q710E8</accession>
<accession>O23326</accession>
<accession>Q94G49</accession>
<proteinExistence type="evidence at protein level"/>
<keyword id="KW-0010">Activator</keyword>
<keyword id="KW-0067">ATP-binding</keyword>
<keyword id="KW-0235">DNA replication</keyword>
<keyword id="KW-0238">DNA-binding</keyword>
<keyword id="KW-0460">Magnesium</keyword>
<keyword id="KW-0479">Metal-binding</keyword>
<keyword id="KW-0547">Nucleotide-binding</keyword>
<keyword id="KW-0539">Nucleus</keyword>
<keyword id="KW-1185">Reference proteome</keyword>
<keyword id="KW-0804">Transcription</keyword>
<keyword id="KW-0805">Transcription regulation</keyword>
<keyword id="KW-0862">Zinc</keyword>
<keyword id="KW-0863">Zinc-finger</keyword>
<comment type="function">
    <text evidence="1 11">Essential protein (PubMed:19171893). Component of the origin recognition complex (ORC) that binds origins of replication. It has a role in both chromosomal replication and mating type transcriptional silencing. Binds to the ARS consensus sequence (ACS) of origins of replication (By similarity). H3K4me3 effector that positively regulates the transcription of a subset of genes (PubMed:19171893).</text>
</comment>
<comment type="subunit">
    <text evidence="9 10 12">Component of the origin recognition complex (ORC) composed of at least ORC1 (ORC1A or ORC1B), ORC2, ORC3, ORC4, ORC5 and ORC6. ORC is regulated in a cell-cycle and development dependent manner. It is sequentially assembled at the exit from anaphase of mitosis and disassembled as cells enter S phase. Interacts directly with ORC2, ORC3, ORC4 and ORC5 (PubMed:15358564, PubMed:16179646). Binds mostly unmodified histone H3, and, with lower efficiency, H3K4me1 H3K4me2 and H3K4me3 (PubMed:26876097).</text>
</comment>
<comment type="interaction">
    <interactant intactId="EBI-2651718">
        <id>Q710E8</id>
    </interactant>
    <interactant intactId="EBI-541722">
        <id>B7U179</id>
        <label>ABAP1</label>
    </interactant>
    <organismsDiffer>false</organismsDiffer>
    <experiments>9</experiments>
</comment>
<comment type="subcellular location">
    <subcellularLocation>
        <location evidence="2">Nucleus</location>
    </subcellularLocation>
</comment>
<comment type="tissue specificity">
    <text evidence="9 10">Follow a cell-cycle regulation with a peak at the G1/S-phase (PubMed:16179646). Mostly expressed in siliques, flowers and flower buds, and, to a lower extent, in roots, leaves and stems (PubMed:15358564, PubMed:16179646).</text>
</comment>
<comment type="developmental stage">
    <text evidence="10">Preferentially expressed in endoreplicating cells, such as cells of the apical hook of dark-grown seedlings.</text>
</comment>
<comment type="induction">
    <text evidence="9 10">Regulated by E2F (PubMed:16179646). Accumulates rapidly after cell cycle reactivation by sucrose addition following cell cycle arrest mediated by sucrose deprivation (PubMed:15358564, PubMed:16179646).</text>
</comment>
<comment type="disruption phenotype">
    <text evidence="14">Lethal.</text>
</comment>
<comment type="similarity">
    <text evidence="16">Belongs to the ORC1 family.</text>
</comment>
<comment type="sequence caution" evidence="16">
    <conflict type="erroneous gene model prediction">
        <sequence resource="EMBL-CDS" id="CAB10249"/>
    </conflict>
</comment>
<comment type="sequence caution" evidence="16">
    <conflict type="erroneous gene model prediction">
        <sequence resource="EMBL-CDS" id="CAB78512"/>
    </conflict>
</comment>
<reference key="1">
    <citation type="journal article" date="2005" name="Nucleic Acids Res.">
        <title>The genes encoding Arabidopsis ORC subunits are E2F targets and the two ORC1 genes are differently expressed in proliferating and endoreplicating cells.</title>
        <authorList>
            <person name="Diaz-Trivino S."/>
            <person name="Castellano M.M."/>
            <person name="Sanchez M.P."/>
            <person name="Ramirez-Parra E."/>
            <person name="Desvoyes B."/>
            <person name="Gutierrez C."/>
        </authorList>
    </citation>
    <scope>NUCLEOTIDE SEQUENCE [MRNA]</scope>
    <scope>SUBUNIT</scope>
    <scope>INTERACTION WITH ORC2; ORC3; ORC4 AND ORC5</scope>
    <scope>TISSUE SPECIFICITY</scope>
    <scope>DEVELOPMENTAL STAGE</scope>
    <scope>INDUCTION BY E2F AND SUCROSE</scope>
    <scope>GENE FAMILY</scope>
    <scope>NOMENCLATURE</scope>
    <source>
        <strain>cv. Columbia</strain>
    </source>
</reference>
<reference key="2">
    <citation type="submission" date="2000-06" db="EMBL/GenBank/DDBJ databases">
        <title>Isolation of an orc1 homolog from Arabidopsis thaliana.</title>
        <authorList>
            <person name="Ramos G.B.A."/>
            <person name="Cabral L.M."/>
            <person name="Ferreira P.C.G."/>
            <person name="Hemerly A.S."/>
        </authorList>
    </citation>
    <scope>NUCLEOTIDE SEQUENCE [MRNA]</scope>
</reference>
<reference key="3">
    <citation type="journal article" date="1998" name="Nature">
        <title>Analysis of 1.9 Mb of contiguous sequence from chromosome 4 of Arabidopsis thaliana.</title>
        <authorList>
            <person name="Bevan M."/>
            <person name="Bancroft I."/>
            <person name="Bent E."/>
            <person name="Love K."/>
            <person name="Goodman H.M."/>
            <person name="Dean C."/>
            <person name="Bergkamp R."/>
            <person name="Dirkse W."/>
            <person name="van Staveren M."/>
            <person name="Stiekema W."/>
            <person name="Drost L."/>
            <person name="Ridley P."/>
            <person name="Hudson S.-A."/>
            <person name="Patel K."/>
            <person name="Murphy G."/>
            <person name="Piffanelli P."/>
            <person name="Wedler H."/>
            <person name="Wedler E."/>
            <person name="Wambutt R."/>
            <person name="Weitzenegger T."/>
            <person name="Pohl T."/>
            <person name="Terryn N."/>
            <person name="Gielen J."/>
            <person name="Villarroel R."/>
            <person name="De Clercq R."/>
            <person name="van Montagu M."/>
            <person name="Lecharny A."/>
            <person name="Aubourg S."/>
            <person name="Gy I."/>
            <person name="Kreis M."/>
            <person name="Lao N."/>
            <person name="Kavanagh T."/>
            <person name="Hempel S."/>
            <person name="Kotter P."/>
            <person name="Entian K.-D."/>
            <person name="Rieger M."/>
            <person name="Schaefer M."/>
            <person name="Funk B."/>
            <person name="Mueller-Auer S."/>
            <person name="Silvey M."/>
            <person name="James R."/>
            <person name="Monfort A."/>
            <person name="Pons A."/>
            <person name="Puigdomenech P."/>
            <person name="Douka A."/>
            <person name="Voukelatou E."/>
            <person name="Milioni D."/>
            <person name="Hatzopoulos P."/>
            <person name="Piravandi E."/>
            <person name="Obermaier B."/>
            <person name="Hilbert H."/>
            <person name="Duesterhoeft A."/>
            <person name="Moores T."/>
            <person name="Jones J.D.G."/>
            <person name="Eneva T."/>
            <person name="Palme K."/>
            <person name="Benes V."/>
            <person name="Rechmann S."/>
            <person name="Ansorge W."/>
            <person name="Cooke R."/>
            <person name="Berger C."/>
            <person name="Delseny M."/>
            <person name="Voet M."/>
            <person name="Volckaert G."/>
            <person name="Mewes H.-W."/>
            <person name="Klosterman S."/>
            <person name="Schueller C."/>
            <person name="Chalwatzis N."/>
        </authorList>
    </citation>
    <scope>NUCLEOTIDE SEQUENCE [LARGE SCALE GENOMIC DNA]</scope>
    <source>
        <strain>cv. Columbia</strain>
    </source>
</reference>
<reference key="4">
    <citation type="journal article" date="1999" name="Nature">
        <title>Sequence and analysis of chromosome 4 of the plant Arabidopsis thaliana.</title>
        <authorList>
            <person name="Mayer K.F.X."/>
            <person name="Schueller C."/>
            <person name="Wambutt R."/>
            <person name="Murphy G."/>
            <person name="Volckaert G."/>
            <person name="Pohl T."/>
            <person name="Duesterhoeft A."/>
            <person name="Stiekema W."/>
            <person name="Entian K.-D."/>
            <person name="Terryn N."/>
            <person name="Harris B."/>
            <person name="Ansorge W."/>
            <person name="Brandt P."/>
            <person name="Grivell L.A."/>
            <person name="Rieger M."/>
            <person name="Weichselgartner M."/>
            <person name="de Simone V."/>
            <person name="Obermaier B."/>
            <person name="Mache R."/>
            <person name="Mueller M."/>
            <person name="Kreis M."/>
            <person name="Delseny M."/>
            <person name="Puigdomenech P."/>
            <person name="Watson M."/>
            <person name="Schmidtheini T."/>
            <person name="Reichert B."/>
            <person name="Portetelle D."/>
            <person name="Perez-Alonso M."/>
            <person name="Boutry M."/>
            <person name="Bancroft I."/>
            <person name="Vos P."/>
            <person name="Hoheisel J."/>
            <person name="Zimmermann W."/>
            <person name="Wedler H."/>
            <person name="Ridley P."/>
            <person name="Langham S.-A."/>
            <person name="McCullagh B."/>
            <person name="Bilham L."/>
            <person name="Robben J."/>
            <person name="van der Schueren J."/>
            <person name="Grymonprez B."/>
            <person name="Chuang Y.-J."/>
            <person name="Vandenbussche F."/>
            <person name="Braeken M."/>
            <person name="Weltjens I."/>
            <person name="Voet M."/>
            <person name="Bastiaens I."/>
            <person name="Aert R."/>
            <person name="Defoor E."/>
            <person name="Weitzenegger T."/>
            <person name="Bothe G."/>
            <person name="Ramsperger U."/>
            <person name="Hilbert H."/>
            <person name="Braun M."/>
            <person name="Holzer E."/>
            <person name="Brandt A."/>
            <person name="Peters S."/>
            <person name="van Staveren M."/>
            <person name="Dirkse W."/>
            <person name="Mooijman P."/>
            <person name="Klein Lankhorst R."/>
            <person name="Rose M."/>
            <person name="Hauf J."/>
            <person name="Koetter P."/>
            <person name="Berneiser S."/>
            <person name="Hempel S."/>
            <person name="Feldpausch M."/>
            <person name="Lamberth S."/>
            <person name="Van den Daele H."/>
            <person name="De Keyser A."/>
            <person name="Buysshaert C."/>
            <person name="Gielen J."/>
            <person name="Villarroel R."/>
            <person name="De Clercq R."/>
            <person name="van Montagu M."/>
            <person name="Rogers J."/>
            <person name="Cronin A."/>
            <person name="Quail M.A."/>
            <person name="Bray-Allen S."/>
            <person name="Clark L."/>
            <person name="Doggett J."/>
            <person name="Hall S."/>
            <person name="Kay M."/>
            <person name="Lennard N."/>
            <person name="McLay K."/>
            <person name="Mayes R."/>
            <person name="Pettett A."/>
            <person name="Rajandream M.A."/>
            <person name="Lyne M."/>
            <person name="Benes V."/>
            <person name="Rechmann S."/>
            <person name="Borkova D."/>
            <person name="Bloecker H."/>
            <person name="Scharfe M."/>
            <person name="Grimm M."/>
            <person name="Loehnert T.-H."/>
            <person name="Dose S."/>
            <person name="de Haan M."/>
            <person name="Maarse A.C."/>
            <person name="Schaefer M."/>
            <person name="Mueller-Auer S."/>
            <person name="Gabel C."/>
            <person name="Fuchs M."/>
            <person name="Fartmann B."/>
            <person name="Granderath K."/>
            <person name="Dauner D."/>
            <person name="Herzl A."/>
            <person name="Neumann S."/>
            <person name="Argiriou A."/>
            <person name="Vitale D."/>
            <person name="Liguori R."/>
            <person name="Piravandi E."/>
            <person name="Massenet O."/>
            <person name="Quigley F."/>
            <person name="Clabauld G."/>
            <person name="Muendlein A."/>
            <person name="Felber R."/>
            <person name="Schnabl S."/>
            <person name="Hiller R."/>
            <person name="Schmidt W."/>
            <person name="Lecharny A."/>
            <person name="Aubourg S."/>
            <person name="Chefdor F."/>
            <person name="Cooke R."/>
            <person name="Berger C."/>
            <person name="Monfort A."/>
            <person name="Casacuberta E."/>
            <person name="Gibbons T."/>
            <person name="Weber N."/>
            <person name="Vandenbol M."/>
            <person name="Bargues M."/>
            <person name="Terol J."/>
            <person name="Torres A."/>
            <person name="Perez-Perez A."/>
            <person name="Purnelle B."/>
            <person name="Bent E."/>
            <person name="Johnson S."/>
            <person name="Tacon D."/>
            <person name="Jesse T."/>
            <person name="Heijnen L."/>
            <person name="Schwarz S."/>
            <person name="Scholler P."/>
            <person name="Heber S."/>
            <person name="Francs P."/>
            <person name="Bielke C."/>
            <person name="Frishman D."/>
            <person name="Haase D."/>
            <person name="Lemcke K."/>
            <person name="Mewes H.-W."/>
            <person name="Stocker S."/>
            <person name="Zaccaria P."/>
            <person name="Bevan M."/>
            <person name="Wilson R.K."/>
            <person name="de la Bastide M."/>
            <person name="Habermann K."/>
            <person name="Parnell L."/>
            <person name="Dedhia N."/>
            <person name="Gnoj L."/>
            <person name="Schutz K."/>
            <person name="Huang E."/>
            <person name="Spiegel L."/>
            <person name="Sekhon M."/>
            <person name="Murray J."/>
            <person name="Sheet P."/>
            <person name="Cordes M."/>
            <person name="Abu-Threideh J."/>
            <person name="Stoneking T."/>
            <person name="Kalicki J."/>
            <person name="Graves T."/>
            <person name="Harmon G."/>
            <person name="Edwards J."/>
            <person name="Latreille P."/>
            <person name="Courtney L."/>
            <person name="Cloud J."/>
            <person name="Abbott A."/>
            <person name="Scott K."/>
            <person name="Johnson D."/>
            <person name="Minx P."/>
            <person name="Bentley D."/>
            <person name="Fulton B."/>
            <person name="Miller N."/>
            <person name="Greco T."/>
            <person name="Kemp K."/>
            <person name="Kramer J."/>
            <person name="Fulton L."/>
            <person name="Mardis E."/>
            <person name="Dante M."/>
            <person name="Pepin K."/>
            <person name="Hillier L.W."/>
            <person name="Nelson J."/>
            <person name="Spieth J."/>
            <person name="Ryan E."/>
            <person name="Andrews S."/>
            <person name="Geisel C."/>
            <person name="Layman D."/>
            <person name="Du H."/>
            <person name="Ali J."/>
            <person name="Berghoff A."/>
            <person name="Jones K."/>
            <person name="Drone K."/>
            <person name="Cotton M."/>
            <person name="Joshu C."/>
            <person name="Antonoiu B."/>
            <person name="Zidanic M."/>
            <person name="Strong C."/>
            <person name="Sun H."/>
            <person name="Lamar B."/>
            <person name="Yordan C."/>
            <person name="Ma P."/>
            <person name="Zhong J."/>
            <person name="Preston R."/>
            <person name="Vil D."/>
            <person name="Shekher M."/>
            <person name="Matero A."/>
            <person name="Shah R."/>
            <person name="Swaby I.K."/>
            <person name="O'Shaughnessy A."/>
            <person name="Rodriguez M."/>
            <person name="Hoffman J."/>
            <person name="Till S."/>
            <person name="Granat S."/>
            <person name="Shohdy N."/>
            <person name="Hasegawa A."/>
            <person name="Hameed A."/>
            <person name="Lodhi M."/>
            <person name="Johnson A."/>
            <person name="Chen E."/>
            <person name="Marra M.A."/>
            <person name="Martienssen R."/>
            <person name="McCombie W.R."/>
        </authorList>
    </citation>
    <scope>NUCLEOTIDE SEQUENCE [LARGE SCALE GENOMIC DNA]</scope>
    <source>
        <strain>cv. Columbia</strain>
    </source>
</reference>
<reference key="5">
    <citation type="journal article" date="2017" name="Plant J.">
        <title>Araport11: a complete reannotation of the Arabidopsis thaliana reference genome.</title>
        <authorList>
            <person name="Cheng C.Y."/>
            <person name="Krishnakumar V."/>
            <person name="Chan A.P."/>
            <person name="Thibaud-Nissen F."/>
            <person name="Schobel S."/>
            <person name="Town C.D."/>
        </authorList>
    </citation>
    <scope>GENOME REANNOTATION</scope>
    <source>
        <strain>cv. Columbia</strain>
    </source>
</reference>
<reference key="6">
    <citation type="journal article" date="2004" name="FEBS Lett.">
        <title>Genome based identification and analysis of the pre-replicative complex of Arabidopsis thaliana.</title>
        <authorList>
            <person name="Masuda H.P."/>
            <person name="Ramos G.B.A."/>
            <person name="de Almeida-Engler J."/>
            <person name="Cabral L.M."/>
            <person name="Coqueiro V.M."/>
            <person name="Macrini C.M.T."/>
            <person name="Ferreira P.C.G."/>
            <person name="Hemerly A.S."/>
        </authorList>
    </citation>
    <scope>SUBUNIT</scope>
    <scope>TISSUE SPECIFICITY</scope>
    <scope>INDUCTION BY SUCROSE</scope>
    <scope>GENE FAMILY</scope>
    <source>
        <strain>cv. Columbia</strain>
    </source>
</reference>
<reference key="7">
    <citation type="journal article" date="2007" name="Plant Physiol.">
        <title>Genome-wide analysis of the core DNA replication machinery in the higher plants Arabidopsis and rice.</title>
        <authorList>
            <person name="Shultz R.W."/>
            <person name="Tatineni V.M."/>
            <person name="Hanley-Bowdoin L."/>
            <person name="Thompson W.F."/>
        </authorList>
    </citation>
    <scope>REVIEW ON THE CORE DNA REPLICATION MACHINERY</scope>
</reference>
<reference key="8">
    <citation type="journal article" date="2009" name="Proc. Natl. Acad. Sci. U.S.A.">
        <title>Arabidopsis ORC1 is a PHD-containing H3K4me3 effector that regulates transcription.</title>
        <authorList>
            <person name="de la Paz Sanchez M."/>
            <person name="Gutierrez C."/>
        </authorList>
    </citation>
    <scope>FUNCTION</scope>
    <scope>DISRUPTION PHENOTYPE</scope>
</reference>
<reference key="9">
    <citation type="journal article" date="2016" name="Structure">
        <title>Structural basis for the unique multivalent readout of unmodified H3 tail by Arabidopsis ORC1b BAH-PHD cassette.</title>
        <authorList>
            <person name="Li S."/>
            <person name="Yang Z."/>
            <person name="Du X."/>
            <person name="Liu R."/>
            <person name="Wilkinson A.W."/>
            <person name="Gozani O."/>
            <person name="Jacobsen S.E."/>
            <person name="Patel D.J."/>
            <person name="Du J."/>
        </authorList>
    </citation>
    <scope>INTERACTION WITH H3</scope>
</reference>
<protein>
    <recommendedName>
        <fullName evidence="13">Origin of replication complex subunit 1A</fullName>
        <shortName evidence="13">AtORC1a</shortName>
    </recommendedName>
    <alternativeName>
        <fullName evidence="15">Origin recognition complex subunit 1a</fullName>
    </alternativeName>
</protein>
<gene>
    <name evidence="13" type="primary">ORC1A</name>
    <name evidence="17" type="ordered locus">At4g14700</name>
    <name evidence="18" type="ORF">dl3390w</name>
    <name evidence="19" type="ORF">FCAALL.93</name>
</gene>
<dbReference type="EMBL" id="AJ421410">
    <property type="protein sequence ID" value="CAD13174.1"/>
    <property type="molecule type" value="mRNA"/>
</dbReference>
<dbReference type="EMBL" id="AF277982">
    <property type="protein sequence ID" value="AAK69447.1"/>
    <property type="molecule type" value="mRNA"/>
</dbReference>
<dbReference type="EMBL" id="Z97336">
    <property type="protein sequence ID" value="CAB10249.1"/>
    <property type="status" value="ALT_SEQ"/>
    <property type="molecule type" value="Genomic_DNA"/>
</dbReference>
<dbReference type="EMBL" id="AL161539">
    <property type="protein sequence ID" value="CAB78512.1"/>
    <property type="status" value="ALT_SEQ"/>
    <property type="molecule type" value="Genomic_DNA"/>
</dbReference>
<dbReference type="EMBL" id="CP002687">
    <property type="protein sequence ID" value="AEE83478.1"/>
    <property type="molecule type" value="Genomic_DNA"/>
</dbReference>
<dbReference type="PIR" id="G71409">
    <property type="entry name" value="G71409"/>
</dbReference>
<dbReference type="RefSeq" id="NP_567440.1">
    <property type="nucleotide sequence ID" value="NM_117553.2"/>
</dbReference>
<dbReference type="SMR" id="Q710E8"/>
<dbReference type="DIP" id="DIP-61909N"/>
<dbReference type="FunCoup" id="Q710E8">
    <property type="interactions" value="13"/>
</dbReference>
<dbReference type="IntAct" id="Q710E8">
    <property type="interactions" value="8"/>
</dbReference>
<dbReference type="MINT" id="Q710E8"/>
<dbReference type="STRING" id="3702.Q710E8"/>
<dbReference type="PaxDb" id="3702-AT4G14700.1"/>
<dbReference type="ProteomicsDB" id="248643"/>
<dbReference type="EnsemblPlants" id="AT4G14700.1">
    <property type="protein sequence ID" value="AT4G14700.1"/>
    <property type="gene ID" value="AT4G14700"/>
</dbReference>
<dbReference type="GeneID" id="827121"/>
<dbReference type="Gramene" id="AT4G14700.1">
    <property type="protein sequence ID" value="AT4G14700.1"/>
    <property type="gene ID" value="AT4G14700"/>
</dbReference>
<dbReference type="KEGG" id="ath:AT4G14700"/>
<dbReference type="Araport" id="AT4G14700"/>
<dbReference type="TAIR" id="AT4G14700">
    <property type="gene designation" value="ORC1A"/>
</dbReference>
<dbReference type="eggNOG" id="KOG1514">
    <property type="taxonomic scope" value="Eukaryota"/>
</dbReference>
<dbReference type="HOGENOM" id="CLU_010923_0_0_1"/>
<dbReference type="InParanoid" id="Q710E8"/>
<dbReference type="OMA" id="EGDWICH"/>
<dbReference type="PhylomeDB" id="Q710E8"/>
<dbReference type="PRO" id="PR:Q710E8"/>
<dbReference type="Proteomes" id="UP000006548">
    <property type="component" value="Chromosome 4"/>
</dbReference>
<dbReference type="ExpressionAtlas" id="Q710E8">
    <property type="expression patterns" value="baseline and differential"/>
</dbReference>
<dbReference type="GO" id="GO:0005634">
    <property type="term" value="C:nucleus"/>
    <property type="evidence" value="ECO:0007669"/>
    <property type="project" value="UniProtKB-SubCell"/>
</dbReference>
<dbReference type="GO" id="GO:0000808">
    <property type="term" value="C:origin recognition complex"/>
    <property type="evidence" value="ECO:0000250"/>
    <property type="project" value="TAIR"/>
</dbReference>
<dbReference type="GO" id="GO:0005524">
    <property type="term" value="F:ATP binding"/>
    <property type="evidence" value="ECO:0007669"/>
    <property type="project" value="UniProtKB-KW"/>
</dbReference>
<dbReference type="GO" id="GO:0016887">
    <property type="term" value="F:ATP hydrolysis activity"/>
    <property type="evidence" value="ECO:0007669"/>
    <property type="project" value="InterPro"/>
</dbReference>
<dbReference type="GO" id="GO:0003682">
    <property type="term" value="F:chromatin binding"/>
    <property type="evidence" value="ECO:0007669"/>
    <property type="project" value="InterPro"/>
</dbReference>
<dbReference type="GO" id="GO:0010385">
    <property type="term" value="F:double-stranded methylated DNA binding"/>
    <property type="evidence" value="ECO:0000314"/>
    <property type="project" value="TAIR"/>
</dbReference>
<dbReference type="GO" id="GO:0008270">
    <property type="term" value="F:zinc ion binding"/>
    <property type="evidence" value="ECO:0007669"/>
    <property type="project" value="UniProtKB-KW"/>
</dbReference>
<dbReference type="GO" id="GO:0006260">
    <property type="term" value="P:DNA replication"/>
    <property type="evidence" value="ECO:0000250"/>
    <property type="project" value="TAIR"/>
</dbReference>
<dbReference type="GO" id="GO:0006355">
    <property type="term" value="P:regulation of DNA-templated transcription"/>
    <property type="evidence" value="ECO:0000315"/>
    <property type="project" value="TAIR"/>
</dbReference>
<dbReference type="CDD" id="cd00009">
    <property type="entry name" value="AAA"/>
    <property type="match status" value="1"/>
</dbReference>
<dbReference type="CDD" id="cd04718">
    <property type="entry name" value="BAH_plant_2"/>
    <property type="match status" value="1"/>
</dbReference>
<dbReference type="FunFam" id="1.10.8.60:FF:000082">
    <property type="entry name" value="Origin recognition complex subunit 1"/>
    <property type="match status" value="1"/>
</dbReference>
<dbReference type="FunFam" id="2.30.30.490:FF:000020">
    <property type="entry name" value="Origin recognition complex subunit 1"/>
    <property type="match status" value="1"/>
</dbReference>
<dbReference type="FunFam" id="3.30.40.10:FF:000691">
    <property type="entry name" value="Origin recognition complex subunit 1"/>
    <property type="match status" value="1"/>
</dbReference>
<dbReference type="FunFam" id="3.40.50.300:FF:000199">
    <property type="entry name" value="Origin recognition complex subunit 1"/>
    <property type="match status" value="1"/>
</dbReference>
<dbReference type="Gene3D" id="1.10.8.60">
    <property type="match status" value="1"/>
</dbReference>
<dbReference type="Gene3D" id="2.30.30.490">
    <property type="match status" value="1"/>
</dbReference>
<dbReference type="Gene3D" id="3.40.50.300">
    <property type="entry name" value="P-loop containing nucleotide triphosphate hydrolases"/>
    <property type="match status" value="1"/>
</dbReference>
<dbReference type="Gene3D" id="3.30.40.10">
    <property type="entry name" value="Zinc/RING finger domain, C3HC4 (zinc finger)"/>
    <property type="match status" value="1"/>
</dbReference>
<dbReference type="InterPro" id="IPR003593">
    <property type="entry name" value="AAA+_ATPase"/>
</dbReference>
<dbReference type="InterPro" id="IPR041083">
    <property type="entry name" value="AAA_lid_10"/>
</dbReference>
<dbReference type="InterPro" id="IPR003959">
    <property type="entry name" value="ATPase_AAA_core"/>
</dbReference>
<dbReference type="InterPro" id="IPR001025">
    <property type="entry name" value="BAH_dom"/>
</dbReference>
<dbReference type="InterPro" id="IPR043151">
    <property type="entry name" value="BAH_sf"/>
</dbReference>
<dbReference type="InterPro" id="IPR015163">
    <property type="entry name" value="Cdc6_C"/>
</dbReference>
<dbReference type="InterPro" id="IPR050311">
    <property type="entry name" value="ORC1/CDC6"/>
</dbReference>
<dbReference type="InterPro" id="IPR027417">
    <property type="entry name" value="P-loop_NTPase"/>
</dbReference>
<dbReference type="InterPro" id="IPR019786">
    <property type="entry name" value="Zinc_finger_PHD-type_CS"/>
</dbReference>
<dbReference type="InterPro" id="IPR011011">
    <property type="entry name" value="Znf_FYVE_PHD"/>
</dbReference>
<dbReference type="InterPro" id="IPR001965">
    <property type="entry name" value="Znf_PHD"/>
</dbReference>
<dbReference type="InterPro" id="IPR019787">
    <property type="entry name" value="Znf_PHD-finger"/>
</dbReference>
<dbReference type="InterPro" id="IPR013083">
    <property type="entry name" value="Znf_RING/FYVE/PHD"/>
</dbReference>
<dbReference type="PANTHER" id="PTHR10763">
    <property type="entry name" value="CELL DIVISION CONTROL PROTEIN 6-RELATED"/>
    <property type="match status" value="1"/>
</dbReference>
<dbReference type="PANTHER" id="PTHR10763:SF23">
    <property type="entry name" value="ORIGIN RECOGNITION COMPLEX SUBUNIT 1"/>
    <property type="match status" value="1"/>
</dbReference>
<dbReference type="Pfam" id="PF00004">
    <property type="entry name" value="AAA"/>
    <property type="match status" value="1"/>
</dbReference>
<dbReference type="Pfam" id="PF17872">
    <property type="entry name" value="AAA_lid_10"/>
    <property type="match status" value="1"/>
</dbReference>
<dbReference type="Pfam" id="PF01426">
    <property type="entry name" value="BAH"/>
    <property type="match status" value="1"/>
</dbReference>
<dbReference type="Pfam" id="PF09079">
    <property type="entry name" value="Cdc6_C"/>
    <property type="match status" value="1"/>
</dbReference>
<dbReference type="Pfam" id="PF00628">
    <property type="entry name" value="PHD"/>
    <property type="match status" value="1"/>
</dbReference>
<dbReference type="SMART" id="SM00382">
    <property type="entry name" value="AAA"/>
    <property type="match status" value="1"/>
</dbReference>
<dbReference type="SMART" id="SM00439">
    <property type="entry name" value="BAH"/>
    <property type="match status" value="1"/>
</dbReference>
<dbReference type="SMART" id="SM00249">
    <property type="entry name" value="PHD"/>
    <property type="match status" value="1"/>
</dbReference>
<dbReference type="SUPFAM" id="SSF57903">
    <property type="entry name" value="FYVE/PHD zinc finger"/>
    <property type="match status" value="1"/>
</dbReference>
<dbReference type="SUPFAM" id="SSF52540">
    <property type="entry name" value="P-loop containing nucleoside triphosphate hydrolases"/>
    <property type="match status" value="1"/>
</dbReference>
<dbReference type="PROSITE" id="PS51038">
    <property type="entry name" value="BAH"/>
    <property type="match status" value="1"/>
</dbReference>
<dbReference type="PROSITE" id="PS01359">
    <property type="entry name" value="ZF_PHD_1"/>
    <property type="match status" value="1"/>
</dbReference>
<dbReference type="PROSITE" id="PS50016">
    <property type="entry name" value="ZF_PHD_2"/>
    <property type="match status" value="1"/>
</dbReference>
<organism>
    <name type="scientific">Arabidopsis thaliana</name>
    <name type="common">Mouse-ear cress</name>
    <dbReference type="NCBI Taxonomy" id="3702"/>
    <lineage>
        <taxon>Eukaryota</taxon>
        <taxon>Viridiplantae</taxon>
        <taxon>Streptophyta</taxon>
        <taxon>Embryophyta</taxon>
        <taxon>Tracheophyta</taxon>
        <taxon>Spermatophyta</taxon>
        <taxon>Magnoliopsida</taxon>
        <taxon>eudicotyledons</taxon>
        <taxon>Gunneridae</taxon>
        <taxon>Pentapetalae</taxon>
        <taxon>rosids</taxon>
        <taxon>malvids</taxon>
        <taxon>Brassicales</taxon>
        <taxon>Brassicaceae</taxon>
        <taxon>Camelineae</taxon>
        <taxon>Arabidopsis</taxon>
    </lineage>
</organism>